<reference key="1">
    <citation type="journal article" date="1985" name="Gene">
        <title>Use of the deoxyinosine-containing probe to isolate and sequence cDNA encoding the fusion (F) glycoprotein of Sendai virus (HVJ).</title>
        <authorList>
            <person name="Miura N."/>
            <person name="Ohtsuka E."/>
            <person name="Yamaberi N."/>
            <person name="Ikehara M."/>
            <person name="Uchida T."/>
            <person name="Okada Y."/>
        </authorList>
    </citation>
    <scope>NUCLEOTIDE SEQUENCE [GENOMIC RNA]</scope>
</reference>
<reference key="2">
    <citation type="journal article" date="1986" name="Nucleic Acids Res.">
        <title>Determination of the complete nucleotide sequence of the Sendai virus genome RNA and the predicted amino acid sequences of the F, HN and L proteins.</title>
        <authorList>
            <person name="Shioda T."/>
            <person name="Iwasaki K."/>
            <person name="Shibuta H."/>
        </authorList>
    </citation>
    <scope>NUCLEOTIDE SEQUENCE [GENOMIC RNA]</scope>
</reference>
<reference key="3">
    <citation type="journal article" date="1988" name="Virology">
        <title>Characterization of a pantropic variant of Sendai virus derived from a host range mutant.</title>
        <authorList>
            <person name="Tashiro M."/>
            <person name="Pritzer E."/>
            <person name="Khoshnan M.A."/>
            <person name="Yamakawa M."/>
            <person name="Kuroda K."/>
            <person name="Klenk H.-D."/>
            <person name="Rott R."/>
            <person name="Seto J.T."/>
        </authorList>
    </citation>
    <scope>NUCLEOTIDE SEQUENCE [GENOMIC RNA]</scope>
    <source>
        <strain>Mutant F1-R</strain>
        <strain>Mutant ts-f1</strain>
    </source>
</reference>
<reference key="4">
    <citation type="journal article" date="1991" name="Virology">
        <title>Pneumotropic revertants derived from a pantropic mutant, F1-R, of Sendai virus.</title>
        <authorList>
            <person name="Tashiro M."/>
            <person name="James I."/>
            <person name="Karri S."/>
            <person name="Wahn K."/>
            <person name="Tobita K."/>
            <person name="Klenk H.-D."/>
            <person name="Rott R."/>
            <person name="Seto J.T."/>
        </authorList>
    </citation>
    <scope>NUCLEOTIDE SEQUENCE [GENOMIC RNA]</scope>
    <source>
        <strain>Mutant F1-R</strain>
        <strain>Mutant F1-R / T-5 revertant</strain>
    </source>
</reference>
<reference key="5">
    <citation type="journal article" date="1992" name="Virology">
        <title>Budding site of Sendai virus in polarized epithelial cells is one of the determinants for tropism and pathogenicity in mice.</title>
        <authorList>
            <person name="Tashiro M."/>
            <person name="Seto J.T."/>
            <person name="Choosakul S."/>
            <person name="Yamakawa M."/>
            <person name="Klenk H.-D."/>
            <person name="Rott R."/>
        </authorList>
    </citation>
    <scope>NUCLEOTIDE SEQUENCE [GENOMIC RNA]</scope>
    <scope>CLEAVAGE BETWEEN F1 AND F2</scope>
    <source>
        <strain>Mutant KD-11</strain>
        <strain>Mutant KD-11M</strain>
        <strain>Mutant KD-21</strain>
        <strain>Mutant KD-22</strain>
        <strain>Mutant KD-22M</strain>
        <strain>Mutant KD-31</strain>
        <strain>Mutant KD-32</strain>
        <strain>Mutant KD-32M</strain>
        <strain>Mutant KD-41</strain>
        <strain>Mutant KD-51</strain>
        <strain>Mutant KD-51M</strain>
        <strain>Mutant KD-52</strain>
        <strain>Mutant KD-52M</strain>
        <strain>Mutant KD-61</strain>
        <strain>Mutant KD-62</strain>
    </source>
</reference>
<reference key="6">
    <citation type="journal article" date="1998" name="Arch. Virol.">
        <title>Determinants of pantropism of the F1-R mutant of Sendai virus: specific mutations involved are in the F and M genes.</title>
        <authorList>
            <person name="Okada H."/>
            <person name="Seto J.T."/>
            <person name="McQueen N.L."/>
            <person name="Klenk H.-D."/>
            <person name="Rott R."/>
            <person name="Tashiro M."/>
        </authorList>
    </citation>
    <scope>NUCLEOTIDE SEQUENCE [GENOMIC RNA]</scope>
    <source>
        <strain>Mutant BF-132</strain>
        <strain>Mutant BF-41</strain>
        <strain>Mutant BF-53</strain>
        <strain>Mutant BF-82</strain>
        <strain>Mutant BY-13</strain>
        <strain>Mutant BY-4</strain>
        <strain>Mutant BY-5</strain>
        <strain>Mutant BY-8</strain>
    </source>
</reference>
<reference key="7">
    <citation type="journal article" date="1984" name="Nucleic Acids Res.">
        <title>Nucleotide sequence of a Sendai virus genome region covering the entire M gene and the 3' proximal 1013 nucleotides of the F gene.</title>
        <authorList>
            <person name="Hidaka Y."/>
            <person name="Kanda T."/>
            <person name="Iwasaki K."/>
            <person name="Nomoto A."/>
            <person name="Shioda T."/>
            <person name="Shibuta H."/>
        </authorList>
    </citation>
    <scope>NUCLEOTIDE SEQUENCE [GENOMIC RNA] OF 1-320</scope>
</reference>
<reference key="8">
    <citation type="journal article" date="1994" name="J. Virol.">
        <title>Assignment of disulfide bridges in the fusion glycoprotein of Sendai virus.</title>
        <authorList>
            <person name="Iwata S."/>
            <person name="Schmidt A.C."/>
            <person name="Titani K."/>
            <person name="Suzuki M."/>
            <person name="Kido H."/>
            <person name="Gotoh B."/>
            <person name="Hamaguchi M."/>
            <person name="Nagai Y."/>
        </authorList>
    </citation>
    <scope>PROTEIN SEQUENCE OF 117-121 AND 283-287</scope>
    <scope>DISULFIDE BONDS</scope>
</reference>
<reference key="9">
    <citation type="journal article" date="1981" name="J. Biol. Chem.">
        <title>Carbohydrate structures of HVJ (Sendai virus) glycoproteins.</title>
        <authorList>
            <person name="Yoshima H."/>
            <person name="Nakanishi M."/>
            <person name="Okada Y."/>
            <person name="Kobata A."/>
        </authorList>
    </citation>
    <scope>GLYCOSYLATION AT ASN-104; ASN-245 AND ASN-449</scope>
</reference>
<reference key="10">
    <citation type="journal article" date="1992" name="J. Virol.">
        <title>Tryptase Clara, an activating protease for Sendai virus in rat lungs, is involved in pneumopathogenicity.</title>
        <authorList>
            <person name="Tashiro M."/>
            <person name="Yokogoshi Y."/>
            <person name="Tobita K."/>
            <person name="Seto J.T."/>
            <person name="Rott R."/>
            <person name="Kido H."/>
        </authorList>
    </citation>
    <scope>CLEAVAGE BY TRYPTASE CLARA</scope>
</reference>
<reference key="11">
    <citation type="journal article" date="1996" name="J. Virol.">
        <title>Functional interaction of paramyxovirus glycoproteins: identification of a domain in Sendai virus HN which promotes cell fusion.</title>
        <authorList>
            <person name="Tanabayashi K."/>
            <person name="Compans R.W."/>
        </authorList>
    </citation>
    <scope>INTERACTION WITH HN PROTEIN</scope>
</reference>
<reference key="12">
    <citation type="journal article" date="1997" name="Biochemistry">
        <title>A leucine zipper motif in the ectodomain of Sendai virus fusion protein assembles in solution and in membranes and specifically binds biologically-active peptides and the virus.</title>
        <authorList>
            <person name="Ghosh J.K."/>
            <person name="Ovadia M."/>
            <person name="Shai Y."/>
        </authorList>
    </citation>
    <scope>DOMAIN LEUCINE-ZIPPER</scope>
</reference>
<reference key="13">
    <citation type="journal article" date="1998" name="J. Biochem.">
        <title>The roles of individual cysteine residues of Sendai virus fusion protein in intracellular transport.</title>
        <authorList>
            <person name="Segawa H."/>
            <person name="Kato M."/>
            <person name="Yamashita T."/>
            <person name="Taira H."/>
        </authorList>
    </citation>
    <scope>DISULFIDE BONDS</scope>
    <scope>MUTAGENESIS OF CYS-70; CYS-199; CYS-338; CYS-347; CYS-362; CYS-370; CYS-394; CYS-399; CYS-401 AND CYS-424</scope>
</reference>
<reference key="14">
    <citation type="journal article" date="1999" name="J. Biochem.">
        <title>Kinetics of interactions of sendai virus envelope glycoproteins, F and HN, with endoplasmic reticulum-resident molecular chaperones, BiP, calnexin, and calreticulin.</title>
        <authorList>
            <person name="Tomita Y."/>
            <person name="Yamashita T."/>
            <person name="Sato H."/>
            <person name="Taira H."/>
        </authorList>
    </citation>
    <scope>INTERACTION WITH CHAPERONES</scope>
</reference>
<reference key="15">
    <citation type="journal article" date="2000" name="J. Biochem.">
        <title>Functional analysis of the individual oligosaccharide chains of sendai virus fusion protein.</title>
        <authorList>
            <person name="Segawa H."/>
            <person name="Yamashita T."/>
            <person name="Kawakita M."/>
            <person name="Taira H."/>
        </authorList>
    </citation>
    <scope>GLYCOSYLATION AT ASN-104; ASN-245 AND ASN-449</scope>
    <scope>MUTAGENESIS OF ASN-104; ASN-245 AND ASN-449</scope>
</reference>
<reference key="16">
    <citation type="journal article" date="2000" name="Virology">
        <title>Assembly of Sendai virus: M protein interacts with F and HN proteins and with the cytoplasmic tail and transmembrane domain of F protein.</title>
        <authorList>
            <person name="Ali A."/>
            <person name="Nayak D.P."/>
        </authorList>
    </citation>
    <scope>INTERACTION WITH M PROTEIN</scope>
</reference>
<reference key="17">
    <citation type="journal article" date="2003" name="EMBO J.">
        <title>The 3D structure of the fusion primed Sendai F-protein determined by electron cryomicroscopy.</title>
        <authorList>
            <person name="Ludwig K."/>
            <person name="Baljinnyam B."/>
            <person name="Herrmann A."/>
            <person name="Boettcher C."/>
        </authorList>
    </citation>
    <scope>THREE-DIMENSIONAL RECONSTRUCTION (16 ANGSTROMS) OF 26-500 BY ELECTRON CRYOMICROSCOPY</scope>
</reference>
<organismHost>
    <name type="scientific">Cavia cutleri</name>
    <name type="common">Guinea pig</name>
    <dbReference type="NCBI Taxonomy" id="10144"/>
</organismHost>
<organismHost>
    <name type="scientific">Cricetidae sp.</name>
    <name type="common">Hamster</name>
    <dbReference type="NCBI Taxonomy" id="36483"/>
</organismHost>
<organismHost>
    <name type="scientific">Mus musculus</name>
    <name type="common">Mouse</name>
    <dbReference type="NCBI Taxonomy" id="10090"/>
</organismHost>
<organismHost>
    <name type="scientific">Rattus norvegicus</name>
    <name type="common">Rat</name>
    <dbReference type="NCBI Taxonomy" id="10116"/>
</organismHost>
<organism>
    <name type="scientific">Sendai virus (strain Z)</name>
    <name type="common">SeV</name>
    <name type="synonym">Sendai virus (strain HVJ)</name>
    <dbReference type="NCBI Taxonomy" id="11198"/>
    <lineage>
        <taxon>Viruses</taxon>
        <taxon>Riboviria</taxon>
        <taxon>Orthornavirae</taxon>
        <taxon>Negarnaviricota</taxon>
        <taxon>Haploviricotina</taxon>
        <taxon>Monjiviricetes</taxon>
        <taxon>Mononegavirales</taxon>
        <taxon>Paramyxoviridae</taxon>
        <taxon>Feraresvirinae</taxon>
        <taxon>Respirovirus</taxon>
        <taxon>Respirovirus muris</taxon>
    </lineage>
</organism>
<feature type="signal peptide">
    <location>
        <begin position="1"/>
        <end position="25"/>
    </location>
</feature>
<feature type="chain" id="PRO_0000039375" description="Fusion glycoprotein F0">
    <location>
        <begin position="26"/>
        <end position="565"/>
    </location>
</feature>
<feature type="chain" id="PRO_0000039376" description="Fusion glycoprotein F2">
    <location>
        <begin position="26"/>
        <end position="116"/>
    </location>
</feature>
<feature type="chain" id="PRO_0000039377" description="Fusion glycoprotein F1">
    <location>
        <begin position="117"/>
        <end position="565"/>
    </location>
</feature>
<feature type="topological domain" description="Extracellular">
    <location>
        <begin position="26"/>
        <end position="500"/>
    </location>
</feature>
<feature type="transmembrane region" description="Helical">
    <location>
        <begin position="501"/>
        <end position="521"/>
    </location>
</feature>
<feature type="topological domain" description="Cytoplasmic">
    <location>
        <begin position="522"/>
        <end position="565"/>
    </location>
</feature>
<feature type="region of interest" description="Fusion peptide">
    <location>
        <begin position="117"/>
        <end position="141"/>
    </location>
</feature>
<feature type="region of interest" description="Leucine-zipper" evidence="2">
    <location>
        <begin position="278"/>
        <end position="306"/>
    </location>
</feature>
<feature type="coiled-coil region" evidence="2">
    <location>
        <begin position="142"/>
        <end position="170"/>
    </location>
</feature>
<feature type="coiled-coil region" evidence="2">
    <location>
        <begin position="466"/>
        <end position="491"/>
    </location>
</feature>
<feature type="site" description="Cleavage; by arginine-specific endoprotease">
    <location>
        <begin position="116"/>
        <end position="117"/>
    </location>
</feature>
<feature type="glycosylation site" description="N-linked (GlcNAc...) asparagine; by host" evidence="4 6">
    <location>
        <position position="104"/>
    </location>
</feature>
<feature type="glycosylation site" description="N-linked (GlcNAc...) asparagine; by host" evidence="4 6">
    <location>
        <position position="245"/>
    </location>
</feature>
<feature type="glycosylation site" description="N-linked (GlcNAc...) asparagine; by host" evidence="4 6">
    <location>
        <position position="449"/>
    </location>
</feature>
<feature type="disulfide bond" description="Interchain (between F2 and F1 chains)">
    <location>
        <begin position="70"/>
        <end position="199"/>
    </location>
</feature>
<feature type="disulfide bond">
    <location>
        <begin position="338"/>
        <end position="347"/>
    </location>
</feature>
<feature type="disulfide bond">
    <location>
        <begin position="362"/>
        <end position="370"/>
    </location>
</feature>
<feature type="disulfide bond" evidence="1">
    <location>
        <begin position="394"/>
        <end position="399"/>
    </location>
</feature>
<feature type="disulfide bond" evidence="1">
    <location>
        <begin position="401"/>
        <end position="424"/>
    </location>
</feature>
<feature type="sequence variant" description="In strain: Mutant KD-22 in Mutant KD-22M.">
    <original>IV</original>
    <variation>TA</variation>
    <location>
        <begin position="38"/>
        <end position="39"/>
    </location>
</feature>
<feature type="sequence variant" description="In Mutant KD-21 and Mutant KD-52.">
    <original>I</original>
    <variation>V</variation>
    <location>
        <position position="47"/>
    </location>
</feature>
<feature type="sequence variant" description="In strain: Mutant KD-41.">
    <original>I</original>
    <variation>L</variation>
    <location>
        <position position="56"/>
    </location>
</feature>
<feature type="sequence variant" description="In strain: Mutant F1-R, Mutant F1-R / T-5 revertant and Mutant ts-f1.">
    <original>G</original>
    <variation>V</variation>
    <location>
        <position position="63"/>
    </location>
</feature>
<feature type="sequence variant" description="In strain: Mutant KD-32.">
    <original>DFE</original>
    <variation>HFD</variation>
    <location>
        <begin position="65"/>
        <end position="67"/>
    </location>
</feature>
<feature type="sequence variant" description="In strain: Mutant KD-22M and Mutant KD-32M.">
    <original>E</original>
    <variation>Q</variation>
    <location>
        <position position="67"/>
    </location>
</feature>
<feature type="sequence variant" description="In strain: Mutant KD-62.">
    <original>K</original>
    <variation>N</variation>
    <location>
        <position position="79"/>
    </location>
</feature>
<feature type="sequence variant" description="In strain: Mutant BF-41, Mutant BF-53, Mutant BF-82 and Mutant BF-132.">
    <original>R</original>
    <variation>M</variation>
    <location>
        <position position="84"/>
    </location>
</feature>
<feature type="sequence variant" description="In strain: Mutant KD-51 and Mutant KD-51M.">
    <original>R</original>
    <variation>S</variation>
    <location>
        <position position="90"/>
    </location>
</feature>
<feature type="sequence variant" description="In strain: Mutant KD-51M.">
    <original>D</original>
    <variation>V</variation>
    <location>
        <position position="91"/>
    </location>
</feature>
<feature type="sequence variant" description="In strain: Mutant F1-R, Mutant F1-R / T-5 revertant and Mutant ts-f1.">
    <original>N</original>
    <variation>S</variation>
    <location>
        <position position="104"/>
    </location>
</feature>
<feature type="sequence variant" description="In strain: Mutant KD-11 and Mutant KD-11M.">
    <original>DT</original>
    <variation>AP</variation>
    <location>
        <begin position="105"/>
        <end position="106"/>
    </location>
</feature>
<feature type="sequence variant" description="In strain: Mutant KD-31 and Mutant KD-61.">
    <original>N</original>
    <variation>L</variation>
    <location>
        <position position="109"/>
    </location>
</feature>
<feature type="sequence variant" description="In strain: Mutant KD-52M.">
    <original>SR</original>
    <variation>AT</variation>
    <location>
        <begin position="115"/>
        <end position="116"/>
    </location>
</feature>
<feature type="sequence variant" description="In strain: Mutant F1-R and Mutant ts-f1.">
    <original>SR</original>
    <variation>PK</variation>
    <location>
        <begin position="115"/>
        <end position="116"/>
    </location>
</feature>
<feature type="sequence variant" description="In strain: Mutant KD-21 and Mutant KD-62.">
    <original>R</original>
    <variation>I</variation>
    <location>
        <position position="116"/>
    </location>
</feature>
<feature type="sequence variant" description="In strain: Mutant F1-R / T-5 revertant.">
    <original>R</original>
    <variation>K</variation>
    <location>
        <position position="116"/>
    </location>
</feature>
<feature type="sequence variant" description="In strain: Mutant KD-22M.">
    <original>V</original>
    <variation>A</variation>
    <location>
        <position position="129"/>
    </location>
</feature>
<feature type="sequence variant" description="In strain: Mutant KD-32 and KD-32M.">
    <original>E</original>
    <variation>D</variation>
    <location>
        <position position="196"/>
    </location>
</feature>
<feature type="sequence variant" description="In strain: Mutant KD-32 and KD-32M.">
    <original>E</original>
    <variation>G</variation>
    <location>
        <position position="200"/>
    </location>
</feature>
<feature type="sequence variant" description="In strain: Mutant BY-4 and Mutant BY-13.">
    <original>M</original>
    <variation>I</variation>
    <location>
        <position position="250"/>
    </location>
</feature>
<feature type="sequence variant" description="In strain: wild-type, Mutant F1-R, Mutant F1-R / T-5 revertant and Mutant ts-f1.">
    <original>K</original>
    <variation>R</variation>
    <location>
        <position position="254"/>
    </location>
</feature>
<feature type="sequence variant" description="In strain: Mutant F1-R, Mutant F1-R / T-5 revertant and Mutant ts-f1.">
    <original>E</original>
    <variation>K</variation>
    <location>
        <position position="279"/>
    </location>
</feature>
<feature type="sequence variant" description="In strain: Mutant BY-4, Mutant BY-5 and Mutant BY-13.">
    <original>T</original>
    <variation>H</variation>
    <location>
        <position position="318"/>
    </location>
</feature>
<feature type="sequence variant">
    <original>V</original>
    <variation>A</variation>
    <location>
        <position position="319"/>
    </location>
</feature>
<feature type="sequence variant" description="In strain: Mutant KD-61.">
    <original>N</original>
    <variation>Y</variation>
    <location>
        <position position="387"/>
    </location>
</feature>
<feature type="sequence variant" description="In strain: Mutant KD-61.">
    <original>I</original>
    <variation>S</variation>
    <location>
        <position position="395"/>
    </location>
</feature>
<feature type="sequence variant" description="In strain: Mutant KD-52M.">
    <original>C</original>
    <variation>F</variation>
    <location>
        <position position="399"/>
    </location>
</feature>
<feature type="sequence variant" description="In strain: Mutant KD-61.">
    <original>T</original>
    <variation>P</variation>
    <location>
        <position position="400"/>
    </location>
</feature>
<feature type="sequence variant" description="In strain: Mutant KD-52M.">
    <original>N</original>
    <variation>H</variation>
    <location>
        <position position="423"/>
    </location>
</feature>
<feature type="sequence variant" description="In strain: Mutant KD-51 and Mutant KD-51M.">
    <original>I</original>
    <variation>V</variation>
    <location>
        <position position="456"/>
    </location>
</feature>
<feature type="sequence variant" description="In strain: wild-type, Mutant F1-R, Mutant F1-R / T-5 revertant and Mutant ts-f1.">
    <original>I</original>
    <variation>V</variation>
    <location>
        <position position="461"/>
    </location>
</feature>
<feature type="sequence variant" description="In strain: Mutant KD-22.">
    <original>E</original>
    <variation>G</variation>
    <location>
        <position position="480"/>
    </location>
</feature>
<feature type="sequence variant" description="In strain: Mutant KD-51 and Mutant KD-51M.">
    <original>L</original>
    <variation>I</variation>
    <location>
        <position position="488"/>
    </location>
</feature>
<feature type="sequence variant" description="In strain: Mutant F1-R, Mutant F1-R / T-5 revertant and Mutant ts-f1.">
    <original>N</original>
    <variation>K</variation>
    <location>
        <position position="555"/>
    </location>
</feature>
<feature type="mutagenesis site" description="Inhibits transport of F and HN to the cell surface." evidence="10">
    <original>C</original>
    <variation>S</variation>
    <location>
        <position position="70"/>
    </location>
</feature>
<feature type="mutagenesis site" description="Loss of glycosylation, enhances cell fusion activity." evidence="4">
    <original>N</original>
    <variation>G</variation>
    <location>
        <position position="104"/>
    </location>
</feature>
<feature type="mutagenesis site" description="Inhibits transport of F and HN to the cell surface." evidence="10">
    <original>C</original>
    <variation>S</variation>
    <location>
        <position position="199"/>
    </location>
</feature>
<feature type="mutagenesis site" description="Loss of glycosylation, cell surface transport and F0 cleavage." evidence="4">
    <original>N</original>
    <variation>G</variation>
    <location>
        <position position="245"/>
    </location>
</feature>
<feature type="mutagenesis site" description="Inhibits transport of F and HN to the cell surface." evidence="10">
    <original>C</original>
    <variation>S</variation>
    <location>
        <position position="338"/>
    </location>
</feature>
<feature type="mutagenesis site" description="Inhibits transport of F and HN to the cell surface." evidence="10">
    <original>C</original>
    <variation>S</variation>
    <location>
        <position position="347"/>
    </location>
</feature>
<feature type="mutagenesis site" description="Inhibits transport of F and HN to the cell surface." evidence="10">
    <original>C</original>
    <variation>S</variation>
    <location>
        <position position="362"/>
    </location>
</feature>
<feature type="mutagenesis site" description="Inhibits transport of F and HN to the cell surface." evidence="10">
    <original>C</original>
    <variation>S</variation>
    <location>
        <position position="370"/>
    </location>
</feature>
<feature type="mutagenesis site" description="Inhibits transport of F and HN to the cell surface." evidence="10">
    <original>C</original>
    <variation>S</variation>
    <location>
        <position position="394"/>
    </location>
</feature>
<feature type="mutagenesis site" description="Inhibits transport of F and HN to the cell surface." evidence="10">
    <original>C</original>
    <variation>S</variation>
    <location>
        <position position="399"/>
    </location>
</feature>
<feature type="mutagenesis site" description="Inhibits transport of F and HN to the cell surface." evidence="10">
    <original>C</original>
    <variation>S</variation>
    <location>
        <position position="401"/>
    </location>
</feature>
<feature type="mutagenesis site" description="Inhibits transport of F and HN to the cell surface." evidence="10">
    <original>C</original>
    <variation>S</variation>
    <location>
        <position position="424"/>
    </location>
</feature>
<feature type="mutagenesis site" description="Loss of glycosylation." evidence="4">
    <original>N</original>
    <variation>G</variation>
    <location>
        <position position="449"/>
    </location>
</feature>
<feature type="sequence conflict" description="In Ref. 2." evidence="11" ref="2">
    <original>Y</original>
    <variation>S</variation>
    <location>
        <position position="261"/>
    </location>
</feature>
<keyword id="KW-0175">Coiled coil</keyword>
<keyword id="KW-0903">Direct protein sequencing</keyword>
<keyword id="KW-1015">Disulfide bond</keyword>
<keyword id="KW-1169">Fusion of virus membrane with host cell membrane</keyword>
<keyword id="KW-1168">Fusion of virus membrane with host membrane</keyword>
<keyword id="KW-0325">Glycoprotein</keyword>
<keyword id="KW-1032">Host cell membrane</keyword>
<keyword id="KW-1043">Host membrane</keyword>
<keyword id="KW-0472">Membrane</keyword>
<keyword id="KW-0732">Signal</keyword>
<keyword id="KW-0812">Transmembrane</keyword>
<keyword id="KW-1133">Transmembrane helix</keyword>
<keyword id="KW-0261">Viral envelope protein</keyword>
<keyword id="KW-1162">Viral penetration into host cytoplasm</keyword>
<keyword id="KW-0946">Virion</keyword>
<keyword id="KW-1160">Virus entry into host cell</keyword>
<sequence>MTAYIQRSQCISTSLLVVLTTLVSCQIPRDRLSNIGVIVDEGKSLKIAGSHESRYIVLSLVPGVDFENGCGTAQVIQYKSLLNRLLIPLRDALDLQEALITVTNDTTQNAGAPQSRFFGAVIGTIALGVATSAQITAGIALAEAREAKRDIALIKESMTKTHKSIELLQNAVGEQILALKTLQDFVNDEIKPAISELGCETAALRLGIKLTQHYSELLTAFGSNFGTIGEKSLTLQALSSLYSANITEIMTTIKTGQSNIYDVIYTEQIKGTVIDVDLERYMVTLSVKIPILSEVPGVLIHKASSISYNIDGEEWYVTVPSHILSRASFLGGADITDCVESRLTYICPRDPAQLIPDSQQKCILGDTTRCPVTKVVDSLIPKFAFVNGGVVANCIASTCTCGTGRRPISQDRSKGVVFLTHDNCGLIGVNGVELYANRRGHDATWGVQNLTVGPAIAIRPIDISLNLADATNFLQDSKAELEKARKILSEVGRWYNSRETVITIIVVMVVILVVIIVIIIVLYRLRRSMLMGNPDDRIPRDTYTLEPKIRHMYTNGGFDAMAEKR</sequence>
<protein>
    <recommendedName>
        <fullName>Fusion glycoprotein F0</fullName>
        <shortName>Protein F</shortName>
    </recommendedName>
    <component>
        <recommendedName>
            <fullName>Fusion glycoprotein F2</fullName>
        </recommendedName>
    </component>
    <component>
        <recommendedName>
            <fullName>Fusion glycoprotein F1</fullName>
        </recommendedName>
    </component>
</protein>
<proteinExistence type="evidence at protein level"/>
<dbReference type="EMBL" id="M12396">
    <property type="protein sequence ID" value="AAA47809.1"/>
    <property type="molecule type" value="Genomic_RNA"/>
</dbReference>
<dbReference type="EMBL" id="X03614">
    <property type="protein sequence ID" value="CAA27275.1"/>
    <property type="molecule type" value="Genomic_RNA"/>
</dbReference>
<dbReference type="EMBL" id="M30202">
    <property type="protein sequence ID" value="AAB06281.1"/>
    <property type="molecule type" value="Genomic_RNA"/>
</dbReference>
<dbReference type="EMBL" id="M30203">
    <property type="protein sequence ID" value="AAB06287.1"/>
    <property type="molecule type" value="Genomic_RNA"/>
</dbReference>
<dbReference type="EMBL" id="M30204">
    <property type="protein sequence ID" value="AAB06199.1"/>
    <property type="molecule type" value="Genomic_RNA"/>
</dbReference>
<dbReference type="EMBL" id="M69046">
    <property type="protein sequence ID" value="AAB06293.1"/>
    <property type="molecule type" value="Genomic_RNA"/>
</dbReference>
<dbReference type="EMBL" id="M55564">
    <property type="protein sequence ID" value="AAA47804.1"/>
    <property type="molecule type" value="Genomic_RNA"/>
</dbReference>
<dbReference type="EMBL" id="U86411">
    <property type="protein sequence ID" value="AAC82291.1"/>
    <property type="molecule type" value="Genomic_DNA"/>
</dbReference>
<dbReference type="EMBL" id="U86412">
    <property type="protein sequence ID" value="AAC82292.1"/>
    <property type="molecule type" value="Genomic_DNA"/>
</dbReference>
<dbReference type="EMBL" id="U86413">
    <property type="protein sequence ID" value="AAC82293.1"/>
    <property type="molecule type" value="Genomic_DNA"/>
</dbReference>
<dbReference type="EMBL" id="U86414">
    <property type="protein sequence ID" value="AAC82294.1"/>
    <property type="molecule type" value="Genomic_DNA"/>
</dbReference>
<dbReference type="EMBL" id="U86415">
    <property type="protein sequence ID" value="AAC82295.1"/>
    <property type="molecule type" value="Genomic_DNA"/>
</dbReference>
<dbReference type="EMBL" id="U86416">
    <property type="protein sequence ID" value="AAC82296.1"/>
    <property type="molecule type" value="Genomic_DNA"/>
</dbReference>
<dbReference type="EMBL" id="U86417">
    <property type="protein sequence ID" value="AAC82297.1"/>
    <property type="molecule type" value="Genomic_DNA"/>
</dbReference>
<dbReference type="EMBL" id="U86418">
    <property type="protein sequence ID" value="AAC82298.1"/>
    <property type="molecule type" value="Genomic_DNA"/>
</dbReference>
<dbReference type="EMBL" id="U86419">
    <property type="protein sequence ID" value="AAC82299.1"/>
    <property type="molecule type" value="Genomic_DNA"/>
</dbReference>
<dbReference type="EMBL" id="U86420">
    <property type="protein sequence ID" value="AAC82300.1"/>
    <property type="molecule type" value="Genomic_DNA"/>
</dbReference>
<dbReference type="EMBL" id="U86421">
    <property type="protein sequence ID" value="AAC82301.1"/>
    <property type="molecule type" value="Genomic_DNA"/>
</dbReference>
<dbReference type="EMBL" id="U86422">
    <property type="protein sequence ID" value="AAC82302.1"/>
    <property type="molecule type" value="Genomic_DNA"/>
</dbReference>
<dbReference type="EMBL" id="U86423">
    <property type="protein sequence ID" value="AAC82303.1"/>
    <property type="molecule type" value="Genomic_DNA"/>
</dbReference>
<dbReference type="EMBL" id="M76993">
    <property type="protein sequence ID" value="AAB06520.1"/>
    <property type="molecule type" value="Genomic_RNA"/>
</dbReference>
<dbReference type="EMBL" id="M76994">
    <property type="protein sequence ID" value="AAB06512.1"/>
    <property type="molecule type" value="Genomic_RNA"/>
</dbReference>
<dbReference type="EMBL" id="M76995">
    <property type="protein sequence ID" value="AAB06513.1"/>
    <property type="molecule type" value="Genomic_RNA"/>
</dbReference>
<dbReference type="EMBL" id="M76996">
    <property type="protein sequence ID" value="AAB06514.1"/>
    <property type="molecule type" value="Genomic_RNA"/>
</dbReference>
<dbReference type="EMBL" id="M76997">
    <property type="protein sequence ID" value="AAB06515.1"/>
    <property type="molecule type" value="Genomic_RNA"/>
</dbReference>
<dbReference type="EMBL" id="M76998">
    <property type="protein sequence ID" value="AAB06516.1"/>
    <property type="molecule type" value="Genomic_RNA"/>
</dbReference>
<dbReference type="EMBL" id="M76999">
    <property type="protein sequence ID" value="AAB06517.1"/>
    <property type="molecule type" value="Genomic_RNA"/>
</dbReference>
<dbReference type="EMBL" id="M77000">
    <property type="protein sequence ID" value="AAB06518.1"/>
    <property type="molecule type" value="Genomic_RNA"/>
</dbReference>
<dbReference type="EMBL" id="M77001">
    <property type="protein sequence ID" value="AAB06519.1"/>
    <property type="molecule type" value="Genomic_RNA"/>
</dbReference>
<dbReference type="EMBL" id="M77002">
    <property type="protein sequence ID" value="AAB06830.1"/>
    <property type="molecule type" value="Genomic_RNA"/>
</dbReference>
<dbReference type="EMBL" id="X00087">
    <property type="protein sequence ID" value="CAA24948.1"/>
    <property type="molecule type" value="Genomic_RNA"/>
</dbReference>
<dbReference type="EMBL" id="AF001283">
    <property type="protein sequence ID" value="AAC82320.1"/>
    <property type="molecule type" value="Genomic_RNA"/>
</dbReference>
<dbReference type="PIR" id="A04036">
    <property type="entry name" value="VGNZSV"/>
</dbReference>
<dbReference type="PIR" id="A24516">
    <property type="entry name" value="VGNZSH"/>
</dbReference>
<dbReference type="SMR" id="P04855"/>
<dbReference type="TCDB" id="1.G.2.1.2">
    <property type="family name" value="the viral pore-forming membrane fusion protein-2 (vmfp2) family"/>
</dbReference>
<dbReference type="GlyConnect" id="167">
    <property type="glycosylation" value="12 N-Linked glycans"/>
</dbReference>
<dbReference type="GlyCosmos" id="P04855">
    <property type="glycosylation" value="3 sites, 20 glycans"/>
</dbReference>
<dbReference type="iPTMnet" id="P04855"/>
<dbReference type="SABIO-RK" id="P04855"/>
<dbReference type="Proteomes" id="UP000006560">
    <property type="component" value="Genome"/>
</dbReference>
<dbReference type="Proteomes" id="UP000110830">
    <property type="component" value="Genome"/>
</dbReference>
<dbReference type="Proteomes" id="UP000163956">
    <property type="component" value="Genome"/>
</dbReference>
<dbReference type="Proteomes" id="UP000169749">
    <property type="component" value="Genome"/>
</dbReference>
<dbReference type="Proteomes" id="UP000181310">
    <property type="component" value="Genome"/>
</dbReference>
<dbReference type="GO" id="GO:0020002">
    <property type="term" value="C:host cell plasma membrane"/>
    <property type="evidence" value="ECO:0007669"/>
    <property type="project" value="UniProtKB-SubCell"/>
</dbReference>
<dbReference type="GO" id="GO:0016020">
    <property type="term" value="C:membrane"/>
    <property type="evidence" value="ECO:0007669"/>
    <property type="project" value="UniProtKB-KW"/>
</dbReference>
<dbReference type="GO" id="GO:0019031">
    <property type="term" value="C:viral envelope"/>
    <property type="evidence" value="ECO:0007669"/>
    <property type="project" value="UniProtKB-KW"/>
</dbReference>
<dbReference type="GO" id="GO:0055036">
    <property type="term" value="C:virion membrane"/>
    <property type="evidence" value="ECO:0007669"/>
    <property type="project" value="UniProtKB-SubCell"/>
</dbReference>
<dbReference type="GO" id="GO:0019064">
    <property type="term" value="P:fusion of virus membrane with host plasma membrane"/>
    <property type="evidence" value="ECO:0007669"/>
    <property type="project" value="UniProtKB-KW"/>
</dbReference>
<dbReference type="GO" id="GO:0046718">
    <property type="term" value="P:symbiont entry into host cell"/>
    <property type="evidence" value="ECO:0007669"/>
    <property type="project" value="UniProtKB-KW"/>
</dbReference>
<dbReference type="Gene3D" id="1.10.287.2480">
    <property type="match status" value="2"/>
</dbReference>
<dbReference type="Gene3D" id="2.60.40.1690">
    <property type="entry name" value="Head and neck region of the ectodomain of NDV fusion glycoprotein"/>
    <property type="match status" value="1"/>
</dbReference>
<dbReference type="Gene3D" id="2.40.490.10">
    <property type="entry name" value="Newcastle disease virus like domain"/>
    <property type="match status" value="1"/>
</dbReference>
<dbReference type="InterPro" id="IPR000776">
    <property type="entry name" value="Fusion_F0_Paramyxovir"/>
</dbReference>
<dbReference type="Pfam" id="PF00523">
    <property type="entry name" value="Fusion_gly"/>
    <property type="match status" value="1"/>
</dbReference>
<dbReference type="SUPFAM" id="SSF69922">
    <property type="entry name" value="Head and neck region of the ectodomain of NDV fusion glycoprotein"/>
    <property type="match status" value="1"/>
</dbReference>
<dbReference type="SUPFAM" id="SSF58069">
    <property type="entry name" value="Virus ectodomain"/>
    <property type="match status" value="1"/>
</dbReference>
<accession>P04855</accession>
<accession>P04854</accession>
<accession>P27564</accession>
<accession>Q6LC43</accession>
<accession>Q84202</accession>
<accession>Q84203</accession>
<accession>Q88251</accession>
<accession>Q88252</accession>
<accession>Q88253</accession>
<accession>Q88254</accession>
<accession>Q88255</accession>
<accession>Q88256</accession>
<accession>Q88257</accession>
<accession>Q88258</accession>
<accession>Q88259</accession>
<accession>Q88260</accession>
<accession>Q9YIY9</accession>
<accession>Q9YJP8</accession>
<accession>Q9YNH1</accession>
<accession>Q9YNH2</accession>
<accession>Q9YNH3</accession>
<accession>Q9YNH4</accession>
<accession>Q9YZ79</accession>
<comment type="function">
    <text>Class I viral fusion protein. Under the current model, the protein has at least 3 conformational states: pre-fusion native state, pre-hairpin intermediate state, and post-fusion hairpin state. During viral and plasma cell membrane fusion, the heptad repeat (HR) regions assume a trimer-of-hairpins structure, positioning the fusion peptide in close proximity to the C-terminal region of the ectodomain. The formation of this structure appears to drive apposition and subsequent fusion of viral and plasma cell membranes. Directs fusion of viral and cellular membranes leading to delivery of the nucleocapsid into the cytoplasm. This fusion is pH independent and occurs directly at the outer cell membrane. The trimer of F1-F2 (F protein) interacts with HN tetramer at the virion surface. Upon HN binding to its cellular receptor, the hydrophobic fusion peptide is unmasked and interacts with the cellular membrane, inducing the fusion between cell and virion membranes. Later in infection, F proteins expressed at the plasma membrane of infected cells could mediate fusion with adjacent cells to form syncytia, a cytopathic effect that could lead to tissue necrosis.</text>
</comment>
<comment type="subunit">
    <text evidence="3 5 7 8 10">Homotrimer of disulfide-linked F1-F2. Interacts with HN and M proteins.</text>
</comment>
<comment type="subcellular location">
    <subcellularLocation>
        <location evidence="1">Virion membrane</location>
        <topology evidence="1">Single-pass type I membrane protein</topology>
    </subcellularLocation>
    <subcellularLocation>
        <location evidence="1">Host cell membrane</location>
        <topology evidence="1">Single-pass membrane protein</topology>
    </subcellularLocation>
    <text>Folded in the endoplasmic reticulum by the human CANX and HSPA5 chaperones.</text>
</comment>
<comment type="domain">
    <text evidence="9">The cytoplasmic region mediates the interaction with HN and M proteins.</text>
</comment>
<comment type="PTM">
    <text>In natural infection, inactive F0 is matured into F1 and F2 outside the cell by one or more trypsin-like, arginine-specific endoprotease secreted by the bronchial epithelial cells. One identified protease that may be involved in this process is tryptase Clara. Unlike most paramyxoviruses, Sendai F0 processing occurs on the cell surface and induces a conformational change in the protein that unmasks the fusion peptide. F0 maturation is a primary determinant for organ tropism and pathogenicity. F1 and F2 display interchain and intrachain disulfide bonds, that are necessary for correct folding and intracellular transport.</text>
</comment>
<comment type="PTM">
    <text evidence="4 6">N-glycosylated; glycans consist of a mixture of high mannose-type oligosaccharides and of complex-type oligosaccharides. Glycosylation at Asn-245 is essential for membrane localization and F0 cleavage.</text>
</comment>
<comment type="miscellaneous">
    <text>Sendai virus or recombinant F protein are widely used in cellular biology to fuse cells.</text>
</comment>
<comment type="similarity">
    <text evidence="11">Belongs to the paramyxoviruses fusion glycoprotein family.</text>
</comment>
<name>FUS_SENDZ</name>
<evidence type="ECO:0000250" key="1"/>
<evidence type="ECO:0000255" key="2"/>
<evidence type="ECO:0000269" key="3">
    <source>
    </source>
</evidence>
<evidence type="ECO:0000269" key="4">
    <source>
    </source>
</evidence>
<evidence type="ECO:0000269" key="5">
    <source>
    </source>
</evidence>
<evidence type="ECO:0000269" key="6">
    <source>
    </source>
</evidence>
<evidence type="ECO:0000269" key="7">
    <source>
    </source>
</evidence>
<evidence type="ECO:0000269" key="8">
    <source>
    </source>
</evidence>
<evidence type="ECO:0000269" key="9">
    <source>
    </source>
</evidence>
<evidence type="ECO:0000269" key="10">
    <source>
    </source>
</evidence>
<evidence type="ECO:0000305" key="11"/>
<gene>
    <name type="primary">F</name>
</gene>